<feature type="chain" id="PRO_0000362593" description="ATP synthase subunit a, chloroplastic">
    <location>
        <begin position="1"/>
        <end position="247"/>
    </location>
</feature>
<feature type="transmembrane region" description="Helical" evidence="1">
    <location>
        <begin position="38"/>
        <end position="58"/>
    </location>
</feature>
<feature type="transmembrane region" description="Helical" evidence="1">
    <location>
        <begin position="95"/>
        <end position="115"/>
    </location>
</feature>
<feature type="transmembrane region" description="Helical" evidence="1">
    <location>
        <begin position="134"/>
        <end position="154"/>
    </location>
</feature>
<feature type="transmembrane region" description="Helical" evidence="1">
    <location>
        <begin position="199"/>
        <end position="219"/>
    </location>
</feature>
<feature type="transmembrane region" description="Helical" evidence="1">
    <location>
        <begin position="220"/>
        <end position="240"/>
    </location>
</feature>
<gene>
    <name evidence="1" type="primary">atpI</name>
</gene>
<dbReference type="EMBL" id="AP008956">
    <property type="protein sequence ID" value="BAE97193.1"/>
    <property type="molecule type" value="Genomic_DNA"/>
</dbReference>
<dbReference type="RefSeq" id="YP_665546.1">
    <property type="nucleotide sequence ID" value="NC_008235.1"/>
</dbReference>
<dbReference type="SMR" id="Q14FG9"/>
<dbReference type="GeneID" id="4178223"/>
<dbReference type="KEGG" id="palz:4178223"/>
<dbReference type="OrthoDB" id="11288at3646"/>
<dbReference type="GO" id="GO:0009535">
    <property type="term" value="C:chloroplast thylakoid membrane"/>
    <property type="evidence" value="ECO:0007669"/>
    <property type="project" value="UniProtKB-SubCell"/>
</dbReference>
<dbReference type="GO" id="GO:0005886">
    <property type="term" value="C:plasma membrane"/>
    <property type="evidence" value="ECO:0007669"/>
    <property type="project" value="UniProtKB-UniRule"/>
</dbReference>
<dbReference type="GO" id="GO:0045259">
    <property type="term" value="C:proton-transporting ATP synthase complex"/>
    <property type="evidence" value="ECO:0007669"/>
    <property type="project" value="UniProtKB-KW"/>
</dbReference>
<dbReference type="GO" id="GO:0046933">
    <property type="term" value="F:proton-transporting ATP synthase activity, rotational mechanism"/>
    <property type="evidence" value="ECO:0007669"/>
    <property type="project" value="UniProtKB-UniRule"/>
</dbReference>
<dbReference type="CDD" id="cd00310">
    <property type="entry name" value="ATP-synt_Fo_a_6"/>
    <property type="match status" value="1"/>
</dbReference>
<dbReference type="FunFam" id="1.20.120.220:FF:000001">
    <property type="entry name" value="ATP synthase subunit a, chloroplastic"/>
    <property type="match status" value="1"/>
</dbReference>
<dbReference type="Gene3D" id="1.20.120.220">
    <property type="entry name" value="ATP synthase, F0 complex, subunit A"/>
    <property type="match status" value="1"/>
</dbReference>
<dbReference type="HAMAP" id="MF_01393">
    <property type="entry name" value="ATP_synth_a_bact"/>
    <property type="match status" value="1"/>
</dbReference>
<dbReference type="InterPro" id="IPR045082">
    <property type="entry name" value="ATP_syn_F0_a_bact/chloroplast"/>
</dbReference>
<dbReference type="InterPro" id="IPR000568">
    <property type="entry name" value="ATP_synth_F0_asu"/>
</dbReference>
<dbReference type="InterPro" id="IPR023011">
    <property type="entry name" value="ATP_synth_F0_asu_AS"/>
</dbReference>
<dbReference type="InterPro" id="IPR035908">
    <property type="entry name" value="F0_ATP_A_sf"/>
</dbReference>
<dbReference type="NCBIfam" id="TIGR01131">
    <property type="entry name" value="ATP_synt_6_or_A"/>
    <property type="match status" value="1"/>
</dbReference>
<dbReference type="PANTHER" id="PTHR42823">
    <property type="entry name" value="ATP SYNTHASE SUBUNIT A, CHLOROPLASTIC"/>
    <property type="match status" value="1"/>
</dbReference>
<dbReference type="PANTHER" id="PTHR42823:SF3">
    <property type="entry name" value="ATP SYNTHASE SUBUNIT A, CHLOROPLASTIC"/>
    <property type="match status" value="1"/>
</dbReference>
<dbReference type="Pfam" id="PF00119">
    <property type="entry name" value="ATP-synt_A"/>
    <property type="match status" value="1"/>
</dbReference>
<dbReference type="PRINTS" id="PR00123">
    <property type="entry name" value="ATPASEA"/>
</dbReference>
<dbReference type="SUPFAM" id="SSF81336">
    <property type="entry name" value="F1F0 ATP synthase subunit A"/>
    <property type="match status" value="1"/>
</dbReference>
<dbReference type="PROSITE" id="PS00449">
    <property type="entry name" value="ATPASE_A"/>
    <property type="match status" value="1"/>
</dbReference>
<evidence type="ECO:0000255" key="1">
    <source>
        <dbReference type="HAMAP-Rule" id="MF_01393"/>
    </source>
</evidence>
<organism>
    <name type="scientific">Populus alba</name>
    <name type="common">White poplar</name>
    <dbReference type="NCBI Taxonomy" id="43335"/>
    <lineage>
        <taxon>Eukaryota</taxon>
        <taxon>Viridiplantae</taxon>
        <taxon>Streptophyta</taxon>
        <taxon>Embryophyta</taxon>
        <taxon>Tracheophyta</taxon>
        <taxon>Spermatophyta</taxon>
        <taxon>Magnoliopsida</taxon>
        <taxon>eudicotyledons</taxon>
        <taxon>Gunneridae</taxon>
        <taxon>Pentapetalae</taxon>
        <taxon>rosids</taxon>
        <taxon>fabids</taxon>
        <taxon>Malpighiales</taxon>
        <taxon>Salicaceae</taxon>
        <taxon>Saliceae</taxon>
        <taxon>Populus</taxon>
    </lineage>
</organism>
<name>ATPI_POPAL</name>
<protein>
    <recommendedName>
        <fullName evidence="1">ATP synthase subunit a, chloroplastic</fullName>
    </recommendedName>
    <alternativeName>
        <fullName evidence="1">ATP synthase F0 sector subunit a</fullName>
    </alternativeName>
    <alternativeName>
        <fullName evidence="1">F-ATPase subunit IV</fullName>
    </alternativeName>
</protein>
<keyword id="KW-0066">ATP synthesis</keyword>
<keyword id="KW-0138">CF(0)</keyword>
<keyword id="KW-0150">Chloroplast</keyword>
<keyword id="KW-0375">Hydrogen ion transport</keyword>
<keyword id="KW-0406">Ion transport</keyword>
<keyword id="KW-0472">Membrane</keyword>
<keyword id="KW-0934">Plastid</keyword>
<keyword id="KW-0793">Thylakoid</keyword>
<keyword id="KW-0812">Transmembrane</keyword>
<keyword id="KW-1133">Transmembrane helix</keyword>
<keyword id="KW-0813">Transport</keyword>
<proteinExistence type="inferred from homology"/>
<comment type="function">
    <text evidence="1">Key component of the proton channel; it plays a direct role in the translocation of protons across the membrane.</text>
</comment>
<comment type="subunit">
    <text evidence="1">F-type ATPases have 2 components, CF(1) - the catalytic core - and CF(0) - the membrane proton channel. CF(1) has five subunits: alpha(3), beta(3), gamma(1), delta(1), epsilon(1). CF(0) has four main subunits: a, b, b' and c.</text>
</comment>
<comment type="subcellular location">
    <subcellularLocation>
        <location evidence="1">Plastid</location>
        <location evidence="1">Chloroplast thylakoid membrane</location>
        <topology evidence="1">Multi-pass membrane protein</topology>
    </subcellularLocation>
</comment>
<comment type="similarity">
    <text evidence="1">Belongs to the ATPase A chain family.</text>
</comment>
<sequence length="247" mass="27211">MNVLSYSINTLEGLYEISGVEVGQHFYWKIGGFQVHAQVLITSWVVIVILLGSAIVTVRNPQTIPTDGQNFFEYILEFIRDVSKTQIGEEYGPWVPFIGTLFLFIFVSNWSGALLPWKIIELPHGELAAPTNDINTTVALALLTSIAYFYAGLSKKGLGYFGKYIQPTPILLPINILEDFTKPLSLSFRLFGNILADELVVVVLVSLVPSVVPIPVMFLGLFTSGIQALIFATLAAAYIGESMEGHH</sequence>
<accession>Q14FG9</accession>
<reference key="1">
    <citation type="submission" date="2005-03" db="EMBL/GenBank/DDBJ databases">
        <title>Complete structure of the chloroplast genome of Populus alba.</title>
        <authorList>
            <person name="Okumura S."/>
            <person name="Yamashita A."/>
            <person name="Kanamoto H."/>
            <person name="Hattori M."/>
            <person name="Takase H."/>
            <person name="Tomizawa K."/>
        </authorList>
    </citation>
    <scope>NUCLEOTIDE SEQUENCE [LARGE SCALE GENOMIC DNA]</scope>
</reference>
<geneLocation type="chloroplast"/>